<organism>
    <name type="scientific">Wigglesworthia glossinidia brevipalpis</name>
    <dbReference type="NCBI Taxonomy" id="36870"/>
    <lineage>
        <taxon>Bacteria</taxon>
        <taxon>Pseudomonadati</taxon>
        <taxon>Pseudomonadota</taxon>
        <taxon>Gammaproteobacteria</taxon>
        <taxon>Enterobacterales</taxon>
        <taxon>Erwiniaceae</taxon>
        <taxon>Wigglesworthia</taxon>
    </lineage>
</organism>
<keyword id="KW-1185">Reference proteome</keyword>
<keyword id="KW-0687">Ribonucleoprotein</keyword>
<keyword id="KW-0689">Ribosomal protein</keyword>
<keyword id="KW-0694">RNA-binding</keyword>
<keyword id="KW-0699">rRNA-binding</keyword>
<evidence type="ECO:0000255" key="1">
    <source>
        <dbReference type="HAMAP-Rule" id="MF_01306"/>
    </source>
</evidence>
<evidence type="ECO:0000305" key="2"/>
<name>RS4_WIGBR</name>
<accession>Q8D1Y9</accession>
<proteinExistence type="inferred from homology"/>
<dbReference type="EMBL" id="BA000021">
    <property type="protein sequence ID" value="BAC24713.1"/>
    <property type="status" value="ALT_INIT"/>
    <property type="molecule type" value="Genomic_DNA"/>
</dbReference>
<dbReference type="SMR" id="Q8D1Y9"/>
<dbReference type="STRING" id="36870.gene:10369076"/>
<dbReference type="KEGG" id="wbr:rpsD"/>
<dbReference type="eggNOG" id="COG0522">
    <property type="taxonomic scope" value="Bacteria"/>
</dbReference>
<dbReference type="HOGENOM" id="CLU_092403_0_1_6"/>
<dbReference type="OrthoDB" id="9803672at2"/>
<dbReference type="Proteomes" id="UP000000562">
    <property type="component" value="Chromosome"/>
</dbReference>
<dbReference type="GO" id="GO:0015935">
    <property type="term" value="C:small ribosomal subunit"/>
    <property type="evidence" value="ECO:0007669"/>
    <property type="project" value="InterPro"/>
</dbReference>
<dbReference type="GO" id="GO:0019843">
    <property type="term" value="F:rRNA binding"/>
    <property type="evidence" value="ECO:0007669"/>
    <property type="project" value="UniProtKB-UniRule"/>
</dbReference>
<dbReference type="GO" id="GO:0003735">
    <property type="term" value="F:structural constituent of ribosome"/>
    <property type="evidence" value="ECO:0007669"/>
    <property type="project" value="InterPro"/>
</dbReference>
<dbReference type="GO" id="GO:0042274">
    <property type="term" value="P:ribosomal small subunit biogenesis"/>
    <property type="evidence" value="ECO:0007669"/>
    <property type="project" value="TreeGrafter"/>
</dbReference>
<dbReference type="GO" id="GO:0006412">
    <property type="term" value="P:translation"/>
    <property type="evidence" value="ECO:0007669"/>
    <property type="project" value="UniProtKB-UniRule"/>
</dbReference>
<dbReference type="CDD" id="cd00165">
    <property type="entry name" value="S4"/>
    <property type="match status" value="1"/>
</dbReference>
<dbReference type="FunFam" id="1.10.1050.10:FF:000001">
    <property type="entry name" value="30S ribosomal protein S4"/>
    <property type="match status" value="1"/>
</dbReference>
<dbReference type="FunFam" id="3.10.290.10:FF:000001">
    <property type="entry name" value="30S ribosomal protein S4"/>
    <property type="match status" value="1"/>
</dbReference>
<dbReference type="Gene3D" id="1.10.1050.10">
    <property type="entry name" value="Ribosomal Protein S4 Delta 41, Chain A, domain 1"/>
    <property type="match status" value="1"/>
</dbReference>
<dbReference type="Gene3D" id="3.10.290.10">
    <property type="entry name" value="RNA-binding S4 domain"/>
    <property type="match status" value="1"/>
</dbReference>
<dbReference type="HAMAP" id="MF_01306_B">
    <property type="entry name" value="Ribosomal_uS4_B"/>
    <property type="match status" value="1"/>
</dbReference>
<dbReference type="InterPro" id="IPR022801">
    <property type="entry name" value="Ribosomal_uS4"/>
</dbReference>
<dbReference type="InterPro" id="IPR005709">
    <property type="entry name" value="Ribosomal_uS4_bac-type"/>
</dbReference>
<dbReference type="InterPro" id="IPR018079">
    <property type="entry name" value="Ribosomal_uS4_CS"/>
</dbReference>
<dbReference type="InterPro" id="IPR001912">
    <property type="entry name" value="Ribosomal_uS4_N"/>
</dbReference>
<dbReference type="InterPro" id="IPR002942">
    <property type="entry name" value="S4_RNA-bd"/>
</dbReference>
<dbReference type="InterPro" id="IPR036986">
    <property type="entry name" value="S4_RNA-bd_sf"/>
</dbReference>
<dbReference type="NCBIfam" id="NF003717">
    <property type="entry name" value="PRK05327.1"/>
    <property type="match status" value="1"/>
</dbReference>
<dbReference type="NCBIfam" id="TIGR01017">
    <property type="entry name" value="rpsD_bact"/>
    <property type="match status" value="1"/>
</dbReference>
<dbReference type="PANTHER" id="PTHR11831">
    <property type="entry name" value="30S 40S RIBOSOMAL PROTEIN"/>
    <property type="match status" value="1"/>
</dbReference>
<dbReference type="PANTHER" id="PTHR11831:SF4">
    <property type="entry name" value="SMALL RIBOSOMAL SUBUNIT PROTEIN US4M"/>
    <property type="match status" value="1"/>
</dbReference>
<dbReference type="Pfam" id="PF00163">
    <property type="entry name" value="Ribosomal_S4"/>
    <property type="match status" value="1"/>
</dbReference>
<dbReference type="Pfam" id="PF01479">
    <property type="entry name" value="S4"/>
    <property type="match status" value="1"/>
</dbReference>
<dbReference type="SMART" id="SM01390">
    <property type="entry name" value="Ribosomal_S4"/>
    <property type="match status" value="1"/>
</dbReference>
<dbReference type="SMART" id="SM00363">
    <property type="entry name" value="S4"/>
    <property type="match status" value="1"/>
</dbReference>
<dbReference type="SUPFAM" id="SSF55174">
    <property type="entry name" value="Alpha-L RNA-binding motif"/>
    <property type="match status" value="1"/>
</dbReference>
<dbReference type="PROSITE" id="PS00632">
    <property type="entry name" value="RIBOSOMAL_S4"/>
    <property type="match status" value="1"/>
</dbReference>
<dbReference type="PROSITE" id="PS50889">
    <property type="entry name" value="S4"/>
    <property type="match status" value="1"/>
</dbReference>
<feature type="chain" id="PRO_0000132494" description="Small ribosomal subunit protein uS4">
    <location>
        <begin position="1"/>
        <end position="206"/>
    </location>
</feature>
<feature type="domain" description="S4 RNA-binding" evidence="1">
    <location>
        <begin position="96"/>
        <end position="158"/>
    </location>
</feature>
<reference key="1">
    <citation type="journal article" date="2002" name="Nat. Genet.">
        <title>Genome sequence of the endocellular obligate symbiont of tsetse flies, Wigglesworthia glossinidia.</title>
        <authorList>
            <person name="Akman L."/>
            <person name="Yamashita A."/>
            <person name="Watanabe H."/>
            <person name="Oshima K."/>
            <person name="Shiba T."/>
            <person name="Hattori M."/>
            <person name="Aksoy S."/>
        </authorList>
    </citation>
    <scope>NUCLEOTIDE SEQUENCE [LARGE SCALE GENOMIC DNA]</scope>
</reference>
<sequence>MAKYLGPKLKLSRREGTDLFLKSGVRAIESKCKIDHLPGQHGSRRSRLSDYGIQLREKQKLRRMYVILERQFKKYYKKAVRMKGNTGENLLILLESRLDNVVYRMGFGSTRLESRQLISHKSIIINKKVINIPSYQIKPNDCIEVKEIAKKQSRIKAAIEISEQREKQSWIDVDRVKMQGIFKKFPDRSDLSSEINEHLIIELYSK</sequence>
<comment type="function">
    <text evidence="1">One of the primary rRNA binding proteins, it binds directly to 16S rRNA where it nucleates assembly of the body of the 30S subunit.</text>
</comment>
<comment type="function">
    <text evidence="1">With S5 and S12 plays an important role in translational accuracy.</text>
</comment>
<comment type="subunit">
    <text evidence="1">Part of the 30S ribosomal subunit. Contacts protein S5. The interaction surface between S4 and S5 is involved in control of translational fidelity.</text>
</comment>
<comment type="similarity">
    <text evidence="1">Belongs to the universal ribosomal protein uS4 family.</text>
</comment>
<comment type="sequence caution" evidence="2">
    <conflict type="erroneous initiation">
        <sequence resource="EMBL-CDS" id="BAC24713"/>
    </conflict>
</comment>
<protein>
    <recommendedName>
        <fullName evidence="1">Small ribosomal subunit protein uS4</fullName>
    </recommendedName>
    <alternativeName>
        <fullName evidence="2">30S ribosomal protein S4</fullName>
    </alternativeName>
</protein>
<gene>
    <name evidence="1" type="primary">rpsD</name>
    <name type="ordered locus">WIGBR5670</name>
</gene>